<feature type="chain" id="PRO_1000086930" description="ATP synthase subunit beta">
    <location>
        <begin position="1"/>
        <end position="468"/>
    </location>
</feature>
<feature type="binding site" evidence="1">
    <location>
        <begin position="155"/>
        <end position="162"/>
    </location>
    <ligand>
        <name>ATP</name>
        <dbReference type="ChEBI" id="CHEBI:30616"/>
    </ligand>
</feature>
<protein>
    <recommendedName>
        <fullName evidence="1">ATP synthase subunit beta</fullName>
        <ecNumber evidence="1">7.1.2.2</ecNumber>
    </recommendedName>
    <alternativeName>
        <fullName evidence="1">ATP synthase F1 sector subunit beta</fullName>
    </alternativeName>
    <alternativeName>
        <fullName evidence="1">F-ATPase subunit beta</fullName>
    </alternativeName>
</protein>
<reference key="1">
    <citation type="journal article" date="2007" name="J. Bacteriol.">
        <title>Genome-wide transcriptional changes in Streptococcus gordonii in response to competence signaling peptide.</title>
        <authorList>
            <person name="Vickerman M.M."/>
            <person name="Iobst S."/>
            <person name="Jesionowski A.M."/>
            <person name="Gill S.R."/>
        </authorList>
    </citation>
    <scope>NUCLEOTIDE SEQUENCE [LARGE SCALE GENOMIC DNA]</scope>
    <source>
        <strain>Challis / ATCC 35105 / BCRC 15272 / CH1 / DL1 / V288</strain>
    </source>
</reference>
<gene>
    <name evidence="1" type="primary">atpD</name>
    <name type="ordered locus">SGO_1542</name>
</gene>
<organism>
    <name type="scientific">Streptococcus gordonii (strain Challis / ATCC 35105 / BCRC 15272 / CH1 / DL1 / V288)</name>
    <dbReference type="NCBI Taxonomy" id="467705"/>
    <lineage>
        <taxon>Bacteria</taxon>
        <taxon>Bacillati</taxon>
        <taxon>Bacillota</taxon>
        <taxon>Bacilli</taxon>
        <taxon>Lactobacillales</taxon>
        <taxon>Streptococcaceae</taxon>
        <taxon>Streptococcus</taxon>
    </lineage>
</organism>
<keyword id="KW-0066">ATP synthesis</keyword>
<keyword id="KW-0067">ATP-binding</keyword>
<keyword id="KW-1003">Cell membrane</keyword>
<keyword id="KW-0139">CF(1)</keyword>
<keyword id="KW-0375">Hydrogen ion transport</keyword>
<keyword id="KW-0406">Ion transport</keyword>
<keyword id="KW-0472">Membrane</keyword>
<keyword id="KW-0547">Nucleotide-binding</keyword>
<keyword id="KW-1185">Reference proteome</keyword>
<keyword id="KW-1278">Translocase</keyword>
<keyword id="KW-0813">Transport</keyword>
<name>ATPB_STRGC</name>
<comment type="function">
    <text evidence="1">Produces ATP from ADP in the presence of a proton gradient across the membrane. The catalytic sites are hosted primarily by the beta subunits.</text>
</comment>
<comment type="catalytic activity">
    <reaction evidence="1">
        <text>ATP + H2O + 4 H(+)(in) = ADP + phosphate + 5 H(+)(out)</text>
        <dbReference type="Rhea" id="RHEA:57720"/>
        <dbReference type="ChEBI" id="CHEBI:15377"/>
        <dbReference type="ChEBI" id="CHEBI:15378"/>
        <dbReference type="ChEBI" id="CHEBI:30616"/>
        <dbReference type="ChEBI" id="CHEBI:43474"/>
        <dbReference type="ChEBI" id="CHEBI:456216"/>
        <dbReference type="EC" id="7.1.2.2"/>
    </reaction>
</comment>
<comment type="subunit">
    <text evidence="1">F-type ATPases have 2 components, CF(1) - the catalytic core - and CF(0) - the membrane proton channel. CF(1) has five subunits: alpha(3), beta(3), gamma(1), delta(1), epsilon(1). CF(0) has three main subunits: a(1), b(2) and c(9-12). The alpha and beta chains form an alternating ring which encloses part of the gamma chain. CF(1) is attached to CF(0) by a central stalk formed by the gamma and epsilon chains, while a peripheral stalk is formed by the delta and b chains.</text>
</comment>
<comment type="subcellular location">
    <subcellularLocation>
        <location evidence="1">Cell membrane</location>
        <topology evidence="1">Peripheral membrane protein</topology>
    </subcellularLocation>
</comment>
<comment type="similarity">
    <text evidence="1">Belongs to the ATPase alpha/beta chains family.</text>
</comment>
<sequence length="468" mass="50751">MSSGKITQVIGPVVDVAFAAGDRLPEINNALVVYKNDEKKSKIVLEVALELGDGVVRTIAMESTDGLTRGLEVLDTGRPISVPVGKETLGRVFNVLGDTIDLDAPFGDDAERQPIHKKAPTFDELSTSSEILETGIKVIDLLAPYLKGGKVGLFGGAGVGKTVLIQELIHNIAQEHGGISVFTGVGERTREGNDLYWEMKESGVIEKTAMVFGQMNEPPGARMRVALTGLTIAEYFRDVEGQDVLLFIDNIFRFTQAGSEVSALLGRMPSAVGYQPTLATEMGQLQERITSTKKGSVTSIQAIYVPADDYTDPAPATAFAHLDSTTNLERKLVQLGIYPAVDPLASSSRALAPEIVGEEHYAVAAEVKRVLQRYHELQDIIAILGMDELSDEEKTLVARARRIQFFLSQNFNVAEQFTGQPGSYVPVAETVRGFKEILEGKHDKLPEDAFRGVGSIEDVLAKAEKMGF</sequence>
<proteinExistence type="inferred from homology"/>
<dbReference type="EC" id="7.1.2.2" evidence="1"/>
<dbReference type="EMBL" id="CP000725">
    <property type="protein sequence ID" value="ABV10550.1"/>
    <property type="molecule type" value="Genomic_DNA"/>
</dbReference>
<dbReference type="RefSeq" id="WP_012130613.1">
    <property type="nucleotide sequence ID" value="NC_009785.1"/>
</dbReference>
<dbReference type="SMR" id="A8AYG1"/>
<dbReference type="STRING" id="467705.SGO_1542"/>
<dbReference type="GeneID" id="93787824"/>
<dbReference type="KEGG" id="sgo:SGO_1542"/>
<dbReference type="eggNOG" id="COG0055">
    <property type="taxonomic scope" value="Bacteria"/>
</dbReference>
<dbReference type="HOGENOM" id="CLU_022398_0_2_9"/>
<dbReference type="Proteomes" id="UP000001131">
    <property type="component" value="Chromosome"/>
</dbReference>
<dbReference type="GO" id="GO:0005886">
    <property type="term" value="C:plasma membrane"/>
    <property type="evidence" value="ECO:0007669"/>
    <property type="project" value="UniProtKB-SubCell"/>
</dbReference>
<dbReference type="GO" id="GO:0045259">
    <property type="term" value="C:proton-transporting ATP synthase complex"/>
    <property type="evidence" value="ECO:0007669"/>
    <property type="project" value="UniProtKB-KW"/>
</dbReference>
<dbReference type="GO" id="GO:0005524">
    <property type="term" value="F:ATP binding"/>
    <property type="evidence" value="ECO:0007669"/>
    <property type="project" value="UniProtKB-UniRule"/>
</dbReference>
<dbReference type="GO" id="GO:0016887">
    <property type="term" value="F:ATP hydrolysis activity"/>
    <property type="evidence" value="ECO:0007669"/>
    <property type="project" value="InterPro"/>
</dbReference>
<dbReference type="GO" id="GO:0046933">
    <property type="term" value="F:proton-transporting ATP synthase activity, rotational mechanism"/>
    <property type="evidence" value="ECO:0007669"/>
    <property type="project" value="UniProtKB-UniRule"/>
</dbReference>
<dbReference type="CDD" id="cd18110">
    <property type="entry name" value="ATP-synt_F1_beta_C"/>
    <property type="match status" value="1"/>
</dbReference>
<dbReference type="CDD" id="cd18115">
    <property type="entry name" value="ATP-synt_F1_beta_N"/>
    <property type="match status" value="1"/>
</dbReference>
<dbReference type="CDD" id="cd01133">
    <property type="entry name" value="F1-ATPase_beta_CD"/>
    <property type="match status" value="1"/>
</dbReference>
<dbReference type="FunFam" id="1.10.1140.10:FF:000001">
    <property type="entry name" value="ATP synthase subunit beta"/>
    <property type="match status" value="1"/>
</dbReference>
<dbReference type="FunFam" id="2.40.10.170:FF:000005">
    <property type="entry name" value="ATP synthase subunit beta"/>
    <property type="match status" value="1"/>
</dbReference>
<dbReference type="FunFam" id="3.40.50.300:FF:000004">
    <property type="entry name" value="ATP synthase subunit beta"/>
    <property type="match status" value="1"/>
</dbReference>
<dbReference type="Gene3D" id="2.40.10.170">
    <property type="match status" value="1"/>
</dbReference>
<dbReference type="Gene3D" id="1.10.1140.10">
    <property type="entry name" value="Bovine Mitochondrial F1-atpase, Atp Synthase Beta Chain, Chain D, domain 3"/>
    <property type="match status" value="1"/>
</dbReference>
<dbReference type="Gene3D" id="3.40.50.300">
    <property type="entry name" value="P-loop containing nucleotide triphosphate hydrolases"/>
    <property type="match status" value="1"/>
</dbReference>
<dbReference type="HAMAP" id="MF_01347">
    <property type="entry name" value="ATP_synth_beta_bact"/>
    <property type="match status" value="1"/>
</dbReference>
<dbReference type="InterPro" id="IPR003593">
    <property type="entry name" value="AAA+_ATPase"/>
</dbReference>
<dbReference type="InterPro" id="IPR055190">
    <property type="entry name" value="ATP-synt_VA_C"/>
</dbReference>
<dbReference type="InterPro" id="IPR005722">
    <property type="entry name" value="ATP_synth_F1_bsu"/>
</dbReference>
<dbReference type="InterPro" id="IPR020003">
    <property type="entry name" value="ATPase_a/bsu_AS"/>
</dbReference>
<dbReference type="InterPro" id="IPR050053">
    <property type="entry name" value="ATPase_alpha/beta_chains"/>
</dbReference>
<dbReference type="InterPro" id="IPR004100">
    <property type="entry name" value="ATPase_F1/V1/A1_a/bsu_N"/>
</dbReference>
<dbReference type="InterPro" id="IPR036121">
    <property type="entry name" value="ATPase_F1/V1/A1_a/bsu_N_sf"/>
</dbReference>
<dbReference type="InterPro" id="IPR000194">
    <property type="entry name" value="ATPase_F1/V1/A1_a/bsu_nucl-bd"/>
</dbReference>
<dbReference type="InterPro" id="IPR024034">
    <property type="entry name" value="ATPase_F1/V1_b/a_C"/>
</dbReference>
<dbReference type="InterPro" id="IPR027417">
    <property type="entry name" value="P-loop_NTPase"/>
</dbReference>
<dbReference type="NCBIfam" id="TIGR01039">
    <property type="entry name" value="atpD"/>
    <property type="match status" value="1"/>
</dbReference>
<dbReference type="PANTHER" id="PTHR15184">
    <property type="entry name" value="ATP SYNTHASE"/>
    <property type="match status" value="1"/>
</dbReference>
<dbReference type="PANTHER" id="PTHR15184:SF71">
    <property type="entry name" value="ATP SYNTHASE SUBUNIT BETA, MITOCHONDRIAL"/>
    <property type="match status" value="1"/>
</dbReference>
<dbReference type="Pfam" id="PF00006">
    <property type="entry name" value="ATP-synt_ab"/>
    <property type="match status" value="1"/>
</dbReference>
<dbReference type="Pfam" id="PF02874">
    <property type="entry name" value="ATP-synt_ab_N"/>
    <property type="match status" value="1"/>
</dbReference>
<dbReference type="Pfam" id="PF22919">
    <property type="entry name" value="ATP-synt_VA_C"/>
    <property type="match status" value="1"/>
</dbReference>
<dbReference type="SMART" id="SM00382">
    <property type="entry name" value="AAA"/>
    <property type="match status" value="1"/>
</dbReference>
<dbReference type="SUPFAM" id="SSF47917">
    <property type="entry name" value="C-terminal domain of alpha and beta subunits of F1 ATP synthase"/>
    <property type="match status" value="1"/>
</dbReference>
<dbReference type="SUPFAM" id="SSF50615">
    <property type="entry name" value="N-terminal domain of alpha and beta subunits of F1 ATP synthase"/>
    <property type="match status" value="1"/>
</dbReference>
<dbReference type="SUPFAM" id="SSF52540">
    <property type="entry name" value="P-loop containing nucleoside triphosphate hydrolases"/>
    <property type="match status" value="1"/>
</dbReference>
<dbReference type="PROSITE" id="PS00152">
    <property type="entry name" value="ATPASE_ALPHA_BETA"/>
    <property type="match status" value="1"/>
</dbReference>
<accession>A8AYG1</accession>
<evidence type="ECO:0000255" key="1">
    <source>
        <dbReference type="HAMAP-Rule" id="MF_01347"/>
    </source>
</evidence>